<organism>
    <name type="scientific">Methanothrix thermoacetophila (strain DSM 6194 / JCM 14653 / NBRC 101360 / PT)</name>
    <name type="common">Methanosaeta thermophila</name>
    <dbReference type="NCBI Taxonomy" id="349307"/>
    <lineage>
        <taxon>Archaea</taxon>
        <taxon>Methanobacteriati</taxon>
        <taxon>Methanobacteriota</taxon>
        <taxon>Stenosarchaea group</taxon>
        <taxon>Methanomicrobia</taxon>
        <taxon>Methanotrichales</taxon>
        <taxon>Methanotrichaceae</taxon>
        <taxon>Methanothrix</taxon>
    </lineage>
</organism>
<name>RL11_METTP</name>
<evidence type="ECO:0000255" key="1">
    <source>
        <dbReference type="HAMAP-Rule" id="MF_00736"/>
    </source>
</evidence>
<evidence type="ECO:0000305" key="2"/>
<keyword id="KW-1185">Reference proteome</keyword>
<keyword id="KW-0687">Ribonucleoprotein</keyword>
<keyword id="KW-0689">Ribosomal protein</keyword>
<keyword id="KW-0694">RNA-binding</keyword>
<keyword id="KW-0699">rRNA-binding</keyword>
<gene>
    <name evidence="1" type="primary">rpl11</name>
    <name type="ordered locus">Mthe_1422</name>
</gene>
<accession>A0B923</accession>
<feature type="chain" id="PRO_1000083389" description="Large ribosomal subunit protein uL11">
    <location>
        <begin position="1"/>
        <end position="159"/>
    </location>
</feature>
<sequence>MANVVEALVSGGKATAGPPLGPALGPLGVNVAAVVAKINELTKDLNGMQVPVKIIVKSRTEFEIEVGTPPTSALLLKEAGVEKGSGDKKNFVGDISMDQVIKVAEIKRKNLLSSNLKSAVSEIVGTCGTLGIKIDGLTSKEVQKALASGSYDHLFEAKS</sequence>
<protein>
    <recommendedName>
        <fullName evidence="1">Large ribosomal subunit protein uL11</fullName>
    </recommendedName>
    <alternativeName>
        <fullName evidence="2">50S ribosomal protein L11</fullName>
    </alternativeName>
</protein>
<dbReference type="EMBL" id="CP000477">
    <property type="protein sequence ID" value="ABK15197.1"/>
    <property type="molecule type" value="Genomic_DNA"/>
</dbReference>
<dbReference type="SMR" id="A0B923"/>
<dbReference type="STRING" id="349307.Mthe_1422"/>
<dbReference type="KEGG" id="mtp:Mthe_1422"/>
<dbReference type="HOGENOM" id="CLU_074237_4_0_2"/>
<dbReference type="OrthoDB" id="8842at2157"/>
<dbReference type="Proteomes" id="UP000000674">
    <property type="component" value="Chromosome"/>
</dbReference>
<dbReference type="GO" id="GO:0015934">
    <property type="term" value="C:large ribosomal subunit"/>
    <property type="evidence" value="ECO:0007669"/>
    <property type="project" value="TreeGrafter"/>
</dbReference>
<dbReference type="GO" id="GO:0070180">
    <property type="term" value="F:large ribosomal subunit rRNA binding"/>
    <property type="evidence" value="ECO:0007669"/>
    <property type="project" value="UniProtKB-UniRule"/>
</dbReference>
<dbReference type="GO" id="GO:0003735">
    <property type="term" value="F:structural constituent of ribosome"/>
    <property type="evidence" value="ECO:0007669"/>
    <property type="project" value="InterPro"/>
</dbReference>
<dbReference type="GO" id="GO:0006412">
    <property type="term" value="P:translation"/>
    <property type="evidence" value="ECO:0007669"/>
    <property type="project" value="UniProtKB-UniRule"/>
</dbReference>
<dbReference type="CDD" id="cd00349">
    <property type="entry name" value="Ribosomal_L11"/>
    <property type="match status" value="1"/>
</dbReference>
<dbReference type="Gene3D" id="1.10.10.250">
    <property type="entry name" value="Ribosomal protein L11, C-terminal domain"/>
    <property type="match status" value="1"/>
</dbReference>
<dbReference type="Gene3D" id="3.30.1550.10">
    <property type="entry name" value="Ribosomal protein L11/L12, N-terminal domain"/>
    <property type="match status" value="1"/>
</dbReference>
<dbReference type="HAMAP" id="MF_00736">
    <property type="entry name" value="Ribosomal_uL11"/>
    <property type="match status" value="1"/>
</dbReference>
<dbReference type="InterPro" id="IPR000911">
    <property type="entry name" value="Ribosomal_uL11"/>
</dbReference>
<dbReference type="InterPro" id="IPR020783">
    <property type="entry name" value="Ribosomal_uL11_C"/>
</dbReference>
<dbReference type="InterPro" id="IPR036769">
    <property type="entry name" value="Ribosomal_uL11_C_sf"/>
</dbReference>
<dbReference type="InterPro" id="IPR020784">
    <property type="entry name" value="Ribosomal_uL11_N"/>
</dbReference>
<dbReference type="InterPro" id="IPR036796">
    <property type="entry name" value="Ribosomal_uL11_N_sf"/>
</dbReference>
<dbReference type="NCBIfam" id="NF002232">
    <property type="entry name" value="PRK01143.1"/>
    <property type="match status" value="1"/>
</dbReference>
<dbReference type="PANTHER" id="PTHR11661">
    <property type="entry name" value="60S RIBOSOMAL PROTEIN L12"/>
    <property type="match status" value="1"/>
</dbReference>
<dbReference type="PANTHER" id="PTHR11661:SF1">
    <property type="entry name" value="LARGE RIBOSOMAL SUBUNIT PROTEIN UL11M"/>
    <property type="match status" value="1"/>
</dbReference>
<dbReference type="Pfam" id="PF00298">
    <property type="entry name" value="Ribosomal_L11"/>
    <property type="match status" value="1"/>
</dbReference>
<dbReference type="Pfam" id="PF03946">
    <property type="entry name" value="Ribosomal_L11_N"/>
    <property type="match status" value="1"/>
</dbReference>
<dbReference type="SMART" id="SM00649">
    <property type="entry name" value="RL11"/>
    <property type="match status" value="1"/>
</dbReference>
<dbReference type="SUPFAM" id="SSF54747">
    <property type="entry name" value="Ribosomal L11/L12e N-terminal domain"/>
    <property type="match status" value="1"/>
</dbReference>
<dbReference type="SUPFAM" id="SSF46906">
    <property type="entry name" value="Ribosomal protein L11, C-terminal domain"/>
    <property type="match status" value="1"/>
</dbReference>
<reference key="1">
    <citation type="submission" date="2006-10" db="EMBL/GenBank/DDBJ databases">
        <title>Complete sequence of Methanosaeta thermophila PT.</title>
        <authorList>
            <consortium name="US DOE Joint Genome Institute"/>
            <person name="Copeland A."/>
            <person name="Lucas S."/>
            <person name="Lapidus A."/>
            <person name="Barry K."/>
            <person name="Detter J.C."/>
            <person name="Glavina del Rio T."/>
            <person name="Hammon N."/>
            <person name="Israni S."/>
            <person name="Pitluck S."/>
            <person name="Chain P."/>
            <person name="Malfatti S."/>
            <person name="Shin M."/>
            <person name="Vergez L."/>
            <person name="Schmutz J."/>
            <person name="Larimer F."/>
            <person name="Land M."/>
            <person name="Hauser L."/>
            <person name="Kyrpides N."/>
            <person name="Kim E."/>
            <person name="Smith K.S."/>
            <person name="Ingram-Smith C."/>
            <person name="Richardson P."/>
        </authorList>
    </citation>
    <scope>NUCLEOTIDE SEQUENCE [LARGE SCALE GENOMIC DNA]</scope>
    <source>
        <strain>DSM 6194 / JCM 14653 / NBRC 101360 / PT</strain>
    </source>
</reference>
<comment type="function">
    <text evidence="1">Forms part of the ribosomal stalk which helps the ribosome interact with GTP-bound translation factors.</text>
</comment>
<comment type="subunit">
    <text evidence="1">Part of the ribosomal stalk of the 50S ribosomal subunit. Interacts with L10 and the large rRNA to form the base of the stalk. L10 forms an elongated spine to which L12 dimers bind in a sequential fashion forming a multimeric L10(L12)X complex.</text>
</comment>
<comment type="similarity">
    <text evidence="1">Belongs to the universal ribosomal protein uL11 family.</text>
</comment>
<proteinExistence type="inferred from homology"/>